<evidence type="ECO:0000255" key="1">
    <source>
        <dbReference type="HAMAP-Rule" id="MF_00036"/>
    </source>
</evidence>
<organism>
    <name type="scientific">Chlorobium chlorochromatii (strain CaD3)</name>
    <dbReference type="NCBI Taxonomy" id="340177"/>
    <lineage>
        <taxon>Bacteria</taxon>
        <taxon>Pseudomonadati</taxon>
        <taxon>Chlorobiota</taxon>
        <taxon>Chlorobiia</taxon>
        <taxon>Chlorobiales</taxon>
        <taxon>Chlorobiaceae</taxon>
        <taxon>Chlorobium/Pelodictyon group</taxon>
        <taxon>Chlorobium</taxon>
    </lineage>
</organism>
<dbReference type="EC" id="6.1.1.7" evidence="1"/>
<dbReference type="EMBL" id="CP000108">
    <property type="protein sequence ID" value="ABB27642.1"/>
    <property type="molecule type" value="Genomic_DNA"/>
</dbReference>
<dbReference type="SMR" id="Q3ATN3"/>
<dbReference type="STRING" id="340177.Cag_0369"/>
<dbReference type="KEGG" id="cch:Cag_0369"/>
<dbReference type="eggNOG" id="COG0013">
    <property type="taxonomic scope" value="Bacteria"/>
</dbReference>
<dbReference type="HOGENOM" id="CLU_004485_1_1_10"/>
<dbReference type="OrthoDB" id="9803884at2"/>
<dbReference type="GO" id="GO:0005737">
    <property type="term" value="C:cytoplasm"/>
    <property type="evidence" value="ECO:0007669"/>
    <property type="project" value="UniProtKB-SubCell"/>
</dbReference>
<dbReference type="GO" id="GO:0004813">
    <property type="term" value="F:alanine-tRNA ligase activity"/>
    <property type="evidence" value="ECO:0007669"/>
    <property type="project" value="UniProtKB-UniRule"/>
</dbReference>
<dbReference type="GO" id="GO:0002161">
    <property type="term" value="F:aminoacyl-tRNA deacylase activity"/>
    <property type="evidence" value="ECO:0007669"/>
    <property type="project" value="TreeGrafter"/>
</dbReference>
<dbReference type="GO" id="GO:0005524">
    <property type="term" value="F:ATP binding"/>
    <property type="evidence" value="ECO:0007669"/>
    <property type="project" value="UniProtKB-UniRule"/>
</dbReference>
<dbReference type="GO" id="GO:0000049">
    <property type="term" value="F:tRNA binding"/>
    <property type="evidence" value="ECO:0007669"/>
    <property type="project" value="UniProtKB-KW"/>
</dbReference>
<dbReference type="GO" id="GO:0008270">
    <property type="term" value="F:zinc ion binding"/>
    <property type="evidence" value="ECO:0007669"/>
    <property type="project" value="UniProtKB-UniRule"/>
</dbReference>
<dbReference type="GO" id="GO:0006419">
    <property type="term" value="P:alanyl-tRNA aminoacylation"/>
    <property type="evidence" value="ECO:0007669"/>
    <property type="project" value="UniProtKB-UniRule"/>
</dbReference>
<dbReference type="CDD" id="cd00673">
    <property type="entry name" value="AlaRS_core"/>
    <property type="match status" value="1"/>
</dbReference>
<dbReference type="FunFam" id="3.10.310.40:FF:000001">
    <property type="entry name" value="Alanine--tRNA ligase"/>
    <property type="match status" value="1"/>
</dbReference>
<dbReference type="FunFam" id="3.30.930.10:FF:000004">
    <property type="entry name" value="Alanine--tRNA ligase"/>
    <property type="match status" value="1"/>
</dbReference>
<dbReference type="FunFam" id="3.30.980.10:FF:000004">
    <property type="entry name" value="Alanine--tRNA ligase, cytoplasmic"/>
    <property type="match status" value="1"/>
</dbReference>
<dbReference type="Gene3D" id="2.40.30.130">
    <property type="match status" value="1"/>
</dbReference>
<dbReference type="Gene3D" id="3.10.310.40">
    <property type="match status" value="1"/>
</dbReference>
<dbReference type="Gene3D" id="3.30.54.20">
    <property type="match status" value="1"/>
</dbReference>
<dbReference type="Gene3D" id="3.30.930.10">
    <property type="entry name" value="Bira Bifunctional Protein, Domain 2"/>
    <property type="match status" value="1"/>
</dbReference>
<dbReference type="Gene3D" id="3.30.980.10">
    <property type="entry name" value="Threonyl-trna Synthetase, Chain A, domain 2"/>
    <property type="match status" value="1"/>
</dbReference>
<dbReference type="HAMAP" id="MF_00036_B">
    <property type="entry name" value="Ala_tRNA_synth_B"/>
    <property type="match status" value="1"/>
</dbReference>
<dbReference type="InterPro" id="IPR045864">
    <property type="entry name" value="aa-tRNA-synth_II/BPL/LPL"/>
</dbReference>
<dbReference type="InterPro" id="IPR002318">
    <property type="entry name" value="Ala-tRNA-lgiase_IIc"/>
</dbReference>
<dbReference type="InterPro" id="IPR018162">
    <property type="entry name" value="Ala-tRNA-ligase_IIc_anticod-bd"/>
</dbReference>
<dbReference type="InterPro" id="IPR018165">
    <property type="entry name" value="Ala-tRNA-synth_IIc_core"/>
</dbReference>
<dbReference type="InterPro" id="IPR018164">
    <property type="entry name" value="Ala-tRNA-synth_IIc_N"/>
</dbReference>
<dbReference type="InterPro" id="IPR050058">
    <property type="entry name" value="Ala-tRNA_ligase"/>
</dbReference>
<dbReference type="InterPro" id="IPR023033">
    <property type="entry name" value="Ala_tRNA_ligase_euk/bac"/>
</dbReference>
<dbReference type="InterPro" id="IPR003156">
    <property type="entry name" value="DHHA1_dom"/>
</dbReference>
<dbReference type="InterPro" id="IPR018163">
    <property type="entry name" value="Thr/Ala-tRNA-synth_IIc_edit"/>
</dbReference>
<dbReference type="InterPro" id="IPR009000">
    <property type="entry name" value="Transl_B-barrel_sf"/>
</dbReference>
<dbReference type="InterPro" id="IPR012947">
    <property type="entry name" value="tRNA_SAD"/>
</dbReference>
<dbReference type="NCBIfam" id="TIGR00344">
    <property type="entry name" value="alaS"/>
    <property type="match status" value="1"/>
</dbReference>
<dbReference type="PANTHER" id="PTHR11777:SF9">
    <property type="entry name" value="ALANINE--TRNA LIGASE, CYTOPLASMIC"/>
    <property type="match status" value="1"/>
</dbReference>
<dbReference type="PANTHER" id="PTHR11777">
    <property type="entry name" value="ALANYL-TRNA SYNTHETASE"/>
    <property type="match status" value="1"/>
</dbReference>
<dbReference type="Pfam" id="PF02272">
    <property type="entry name" value="DHHA1"/>
    <property type="match status" value="1"/>
</dbReference>
<dbReference type="Pfam" id="PF01411">
    <property type="entry name" value="tRNA-synt_2c"/>
    <property type="match status" value="1"/>
</dbReference>
<dbReference type="Pfam" id="PF07973">
    <property type="entry name" value="tRNA_SAD"/>
    <property type="match status" value="1"/>
</dbReference>
<dbReference type="PRINTS" id="PR00980">
    <property type="entry name" value="TRNASYNTHALA"/>
</dbReference>
<dbReference type="SMART" id="SM00863">
    <property type="entry name" value="tRNA_SAD"/>
    <property type="match status" value="1"/>
</dbReference>
<dbReference type="SUPFAM" id="SSF55681">
    <property type="entry name" value="Class II aaRS and biotin synthetases"/>
    <property type="match status" value="1"/>
</dbReference>
<dbReference type="SUPFAM" id="SSF101353">
    <property type="entry name" value="Putative anticodon-binding domain of alanyl-tRNA synthetase (AlaRS)"/>
    <property type="match status" value="1"/>
</dbReference>
<dbReference type="SUPFAM" id="SSF55186">
    <property type="entry name" value="ThrRS/AlaRS common domain"/>
    <property type="match status" value="1"/>
</dbReference>
<dbReference type="SUPFAM" id="SSF50447">
    <property type="entry name" value="Translation proteins"/>
    <property type="match status" value="1"/>
</dbReference>
<dbReference type="PROSITE" id="PS50860">
    <property type="entry name" value="AA_TRNA_LIGASE_II_ALA"/>
    <property type="match status" value="1"/>
</dbReference>
<feature type="chain" id="PRO_0000347551" description="Alanine--tRNA ligase">
    <location>
        <begin position="1"/>
        <end position="886"/>
    </location>
</feature>
<feature type="binding site" evidence="1">
    <location>
        <position position="570"/>
    </location>
    <ligand>
        <name>Zn(2+)</name>
        <dbReference type="ChEBI" id="CHEBI:29105"/>
    </ligand>
</feature>
<feature type="binding site" evidence="1">
    <location>
        <position position="574"/>
    </location>
    <ligand>
        <name>Zn(2+)</name>
        <dbReference type="ChEBI" id="CHEBI:29105"/>
    </ligand>
</feature>
<feature type="binding site" evidence="1">
    <location>
        <position position="673"/>
    </location>
    <ligand>
        <name>Zn(2+)</name>
        <dbReference type="ChEBI" id="CHEBI:29105"/>
    </ligand>
</feature>
<feature type="binding site" evidence="1">
    <location>
        <position position="677"/>
    </location>
    <ligand>
        <name>Zn(2+)</name>
        <dbReference type="ChEBI" id="CHEBI:29105"/>
    </ligand>
</feature>
<keyword id="KW-0030">Aminoacyl-tRNA synthetase</keyword>
<keyword id="KW-0067">ATP-binding</keyword>
<keyword id="KW-0963">Cytoplasm</keyword>
<keyword id="KW-0436">Ligase</keyword>
<keyword id="KW-0479">Metal-binding</keyword>
<keyword id="KW-0547">Nucleotide-binding</keyword>
<keyword id="KW-0648">Protein biosynthesis</keyword>
<keyword id="KW-0694">RNA-binding</keyword>
<keyword id="KW-0820">tRNA-binding</keyword>
<keyword id="KW-0862">Zinc</keyword>
<protein>
    <recommendedName>
        <fullName evidence="1">Alanine--tRNA ligase</fullName>
        <ecNumber evidence="1">6.1.1.7</ecNumber>
    </recommendedName>
    <alternativeName>
        <fullName evidence="1">Alanyl-tRNA synthetase</fullName>
        <shortName evidence="1">AlaRS</shortName>
    </alternativeName>
</protein>
<gene>
    <name evidence="1" type="primary">alaS</name>
    <name type="ordered locus">Cag_0369</name>
</gene>
<name>SYA_CHLCH</name>
<accession>Q3ATN3</accession>
<reference key="1">
    <citation type="submission" date="2005-08" db="EMBL/GenBank/DDBJ databases">
        <title>Complete sequence of Chlorobium chlorochromatii CaD3.</title>
        <authorList>
            <consortium name="US DOE Joint Genome Institute"/>
            <person name="Copeland A."/>
            <person name="Lucas S."/>
            <person name="Lapidus A."/>
            <person name="Barry K."/>
            <person name="Detter J.C."/>
            <person name="Glavina T."/>
            <person name="Hammon N."/>
            <person name="Israni S."/>
            <person name="Pitluck S."/>
            <person name="Bryant D."/>
            <person name="Schmutz J."/>
            <person name="Larimer F."/>
            <person name="Land M."/>
            <person name="Kyrpides N."/>
            <person name="Ivanova N."/>
            <person name="Richardson P."/>
        </authorList>
    </citation>
    <scope>NUCLEOTIDE SEQUENCE [LARGE SCALE GENOMIC DNA]</scope>
    <source>
        <strain>CaD3</strain>
    </source>
</reference>
<proteinExistence type="inferred from homology"/>
<sequence>MKSHEIRQSFLDFFAQKGHTIVRSAPVIPADDPTLLFTNAGMNQFKDVFLDKGSRPYVRAADTQKCIRASGKHNDLEDVGRDTYHHTFFEMLGNWSFGDYYKLEAITWAWELFTVVWKLPKERLYATVYQDDDESFQIWKEQTDINPDHILRFGDKDNFWEMGETGPCGPCSEIHIDLTPDGSGKELVNVGDYRVIELWNLVFIQYNRQSDGHLEPLPKKHVDTGMGFERIVAVMQGKGSNYDSDVFQPLFDKITEITGVRYGASLDAPNDIAMRVIADHARTLTFALSDGAMPSNEGRGYVLRRILRRALRYSRNLGYHQPILHQLVGTLALAMGEVFPELVQRQEAVSAIIKAEEESFIVTLDRGIDLFSELVEKLRASNGKVIAGSDAFRLYDTYGFPFDLTRLMAADEGFEVDGEGFEHCMQEQKNRARSDRREKQRVDDDGAKWQWFSDVRASQFVGYDHLVHSATITGIRQGNGKLLLVLDATPFYAESGGQTGDNGWLENSRYRLHVADTVKDGDAIVHVVSDAFDKVQDSAVQPEDVEIVEQELAVAASVHRTARQDAERNHTATHLMHAALRRILGEHVQQKGSFVSPERLRFDFSHFSKLTDEEIEAVEIAVNTQIREAEPVVKHADVLFDDAVAKGALAFFGDKYADRVRVVEIPGMSVELCGGTHVDNIGRIGLFKIISEASVASGVRRIEAVTGKAAEKLLWQEYRELQQIRQLLKAKGDEAVVEKVAGLMDSKKELEKELAESRAAALVEQLTAALQAAPEVSGCRVLAIEVKNNDGETMRQATMALRDKAPCAVGLLATVEAGKVVLVSFATDEAVRTCSLDAGALIREAAKQVQGGGGGKAEFATAGGKQPENLSKALDAFTAAVRAKLG</sequence>
<comment type="function">
    <text evidence="1">Catalyzes the attachment of alanine to tRNA(Ala) in a two-step reaction: alanine is first activated by ATP to form Ala-AMP and then transferred to the acceptor end of tRNA(Ala). Also edits incorrectly charged Ser-tRNA(Ala) and Gly-tRNA(Ala) via its editing domain.</text>
</comment>
<comment type="catalytic activity">
    <reaction evidence="1">
        <text>tRNA(Ala) + L-alanine + ATP = L-alanyl-tRNA(Ala) + AMP + diphosphate</text>
        <dbReference type="Rhea" id="RHEA:12540"/>
        <dbReference type="Rhea" id="RHEA-COMP:9657"/>
        <dbReference type="Rhea" id="RHEA-COMP:9923"/>
        <dbReference type="ChEBI" id="CHEBI:30616"/>
        <dbReference type="ChEBI" id="CHEBI:33019"/>
        <dbReference type="ChEBI" id="CHEBI:57972"/>
        <dbReference type="ChEBI" id="CHEBI:78442"/>
        <dbReference type="ChEBI" id="CHEBI:78497"/>
        <dbReference type="ChEBI" id="CHEBI:456215"/>
        <dbReference type="EC" id="6.1.1.7"/>
    </reaction>
</comment>
<comment type="cofactor">
    <cofactor evidence="1">
        <name>Zn(2+)</name>
        <dbReference type="ChEBI" id="CHEBI:29105"/>
    </cofactor>
    <text evidence="1">Binds 1 zinc ion per subunit.</text>
</comment>
<comment type="subcellular location">
    <subcellularLocation>
        <location evidence="1">Cytoplasm</location>
    </subcellularLocation>
</comment>
<comment type="domain">
    <text evidence="1">Consists of three domains; the N-terminal catalytic domain, the editing domain and the C-terminal C-Ala domain. The editing domain removes incorrectly charged amino acids, while the C-Ala domain, along with tRNA(Ala), serves as a bridge to cooperatively bring together the editing and aminoacylation centers thus stimulating deacylation of misacylated tRNAs.</text>
</comment>
<comment type="similarity">
    <text evidence="1">Belongs to the class-II aminoacyl-tRNA synthetase family.</text>
</comment>